<sequence length="404" mass="44667">MKLPIYLDYSATTPVDPRVAQKMSECLLMDGNFGNPASRSHVFGWKAEEAVENARRQVAELVNADPREIVWTSGATESDNLAIKGVAHFYSGKGKHIITSKIEHKAVLDTCRQLEREGFEVTYLEPGEDGLITPALVEAALRDDTILVSVMHVNNEIGTVNDIAAIGELTRSRGVLFHVDAAQSTGKVEIDLDKLKVDLMSFSAHKTYGPKGIGALYVRRKPRVRIEGQMHGGGHERGMRSGTLATHQIVGMGEAFRIAKEEMAQENARVLALRDRFFAQIDGLEELYINGSMTSRVPHNLNVSFNYVEGESLIMALKDLAVSSGSACTSASLEPSYVLRALGRNDELAHSSIRFTFGRFTTEEEIDYAAKKVVEAVSKLRELSPLWDMYKEGVDLSQVEWQAH</sequence>
<protein>
    <recommendedName>
        <fullName evidence="1">Cysteine desulfurase IscS</fullName>
        <ecNumber evidence="1">2.8.1.7</ecNumber>
    </recommendedName>
</protein>
<proteinExistence type="inferred from homology"/>
<name>ISCS_PSEAB</name>
<feature type="chain" id="PRO_1000019423" description="Cysteine desulfurase IscS">
    <location>
        <begin position="1"/>
        <end position="404"/>
    </location>
</feature>
<feature type="active site" description="Cysteine persulfide intermediate" evidence="1">
    <location>
        <position position="328"/>
    </location>
</feature>
<feature type="binding site" evidence="1">
    <location>
        <begin position="75"/>
        <end position="76"/>
    </location>
    <ligand>
        <name>pyridoxal 5'-phosphate</name>
        <dbReference type="ChEBI" id="CHEBI:597326"/>
    </ligand>
</feature>
<feature type="binding site" evidence="1">
    <location>
        <position position="155"/>
    </location>
    <ligand>
        <name>pyridoxal 5'-phosphate</name>
        <dbReference type="ChEBI" id="CHEBI:597326"/>
    </ligand>
</feature>
<feature type="binding site" evidence="1">
    <location>
        <position position="183"/>
    </location>
    <ligand>
        <name>pyridoxal 5'-phosphate</name>
        <dbReference type="ChEBI" id="CHEBI:597326"/>
    </ligand>
</feature>
<feature type="binding site" evidence="1">
    <location>
        <begin position="203"/>
        <end position="205"/>
    </location>
    <ligand>
        <name>pyridoxal 5'-phosphate</name>
        <dbReference type="ChEBI" id="CHEBI:597326"/>
    </ligand>
</feature>
<feature type="binding site" evidence="1">
    <location>
        <position position="243"/>
    </location>
    <ligand>
        <name>pyridoxal 5'-phosphate</name>
        <dbReference type="ChEBI" id="CHEBI:597326"/>
    </ligand>
</feature>
<feature type="binding site" description="via persulfide group" evidence="1">
    <location>
        <position position="328"/>
    </location>
    <ligand>
        <name>[2Fe-2S] cluster</name>
        <dbReference type="ChEBI" id="CHEBI:190135"/>
        <note>ligand shared with IscU</note>
    </ligand>
</feature>
<feature type="modified residue" description="N6-(pyridoxal phosphate)lysine" evidence="1">
    <location>
        <position position="206"/>
    </location>
</feature>
<comment type="function">
    <text evidence="1">Master enzyme that delivers sulfur to a number of partners involved in Fe-S cluster assembly, tRNA modification or cofactor biosynthesis. Catalyzes the removal of elemental sulfur atoms from cysteine to produce alanine. Functions as a sulfur delivery protein for Fe-S cluster synthesis onto IscU, an Fe-S scaffold assembly protein, as well as other S acceptor proteins.</text>
</comment>
<comment type="catalytic activity">
    <reaction evidence="1">
        <text>(sulfur carrier)-H + L-cysteine = (sulfur carrier)-SH + L-alanine</text>
        <dbReference type="Rhea" id="RHEA:43892"/>
        <dbReference type="Rhea" id="RHEA-COMP:14737"/>
        <dbReference type="Rhea" id="RHEA-COMP:14739"/>
        <dbReference type="ChEBI" id="CHEBI:29917"/>
        <dbReference type="ChEBI" id="CHEBI:35235"/>
        <dbReference type="ChEBI" id="CHEBI:57972"/>
        <dbReference type="ChEBI" id="CHEBI:64428"/>
        <dbReference type="EC" id="2.8.1.7"/>
    </reaction>
</comment>
<comment type="cofactor">
    <cofactor evidence="1">
        <name>pyridoxal 5'-phosphate</name>
        <dbReference type="ChEBI" id="CHEBI:597326"/>
    </cofactor>
</comment>
<comment type="pathway">
    <text evidence="1">Cofactor biosynthesis; iron-sulfur cluster biosynthesis.</text>
</comment>
<comment type="subunit">
    <text evidence="1">Homodimer. Forms a heterotetramer with IscU, interacts with other sulfur acceptors.</text>
</comment>
<comment type="subcellular location">
    <subcellularLocation>
        <location evidence="1">Cytoplasm</location>
    </subcellularLocation>
</comment>
<comment type="similarity">
    <text evidence="1">Belongs to the class-V pyridoxal-phosphate-dependent aminotransferase family. NifS/IscS subfamily.</text>
</comment>
<evidence type="ECO:0000255" key="1">
    <source>
        <dbReference type="HAMAP-Rule" id="MF_00331"/>
    </source>
</evidence>
<reference key="1">
    <citation type="journal article" date="2006" name="Genome Biol.">
        <title>Genomic analysis reveals that Pseudomonas aeruginosa virulence is combinatorial.</title>
        <authorList>
            <person name="Lee D.G."/>
            <person name="Urbach J.M."/>
            <person name="Wu G."/>
            <person name="Liberati N.T."/>
            <person name="Feinbaum R.L."/>
            <person name="Miyata S."/>
            <person name="Diggins L.T."/>
            <person name="He J."/>
            <person name="Saucier M."/>
            <person name="Deziel E."/>
            <person name="Friedman L."/>
            <person name="Li L."/>
            <person name="Grills G."/>
            <person name="Montgomery K."/>
            <person name="Kucherlapati R."/>
            <person name="Rahme L.G."/>
            <person name="Ausubel F.M."/>
        </authorList>
    </citation>
    <scope>NUCLEOTIDE SEQUENCE [LARGE SCALE GENOMIC DNA]</scope>
    <source>
        <strain>UCBPP-PA14</strain>
    </source>
</reference>
<gene>
    <name evidence="1" type="primary">iscS</name>
    <name type="ordered locus">PA14_14730</name>
</gene>
<dbReference type="EC" id="2.8.1.7" evidence="1"/>
<dbReference type="EMBL" id="CP000438">
    <property type="protein sequence ID" value="ABJ13075.1"/>
    <property type="molecule type" value="Genomic_DNA"/>
</dbReference>
<dbReference type="RefSeq" id="WP_003092832.1">
    <property type="nucleotide sequence ID" value="NZ_CP034244.1"/>
</dbReference>
<dbReference type="SMR" id="Q02RW8"/>
<dbReference type="KEGG" id="pau:PA14_14730"/>
<dbReference type="PseudoCAP" id="PA14_14730"/>
<dbReference type="HOGENOM" id="CLU_003433_0_2_6"/>
<dbReference type="BioCyc" id="PAER208963:G1G74-1208-MONOMER"/>
<dbReference type="UniPathway" id="UPA00266"/>
<dbReference type="Proteomes" id="UP000000653">
    <property type="component" value="Chromosome"/>
</dbReference>
<dbReference type="GO" id="GO:1990221">
    <property type="term" value="C:L-cysteine desulfurase complex"/>
    <property type="evidence" value="ECO:0007669"/>
    <property type="project" value="UniProtKB-ARBA"/>
</dbReference>
<dbReference type="GO" id="GO:0051537">
    <property type="term" value="F:2 iron, 2 sulfur cluster binding"/>
    <property type="evidence" value="ECO:0007669"/>
    <property type="project" value="UniProtKB-UniRule"/>
</dbReference>
<dbReference type="GO" id="GO:0031071">
    <property type="term" value="F:cysteine desulfurase activity"/>
    <property type="evidence" value="ECO:0007669"/>
    <property type="project" value="UniProtKB-UniRule"/>
</dbReference>
<dbReference type="GO" id="GO:0046872">
    <property type="term" value="F:metal ion binding"/>
    <property type="evidence" value="ECO:0007669"/>
    <property type="project" value="UniProtKB-KW"/>
</dbReference>
<dbReference type="GO" id="GO:0030170">
    <property type="term" value="F:pyridoxal phosphate binding"/>
    <property type="evidence" value="ECO:0007669"/>
    <property type="project" value="UniProtKB-UniRule"/>
</dbReference>
<dbReference type="GO" id="GO:0044571">
    <property type="term" value="P:[2Fe-2S] cluster assembly"/>
    <property type="evidence" value="ECO:0007669"/>
    <property type="project" value="UniProtKB-UniRule"/>
</dbReference>
<dbReference type="FunFam" id="3.40.640.10:FF:000003">
    <property type="entry name" value="Cysteine desulfurase IscS"/>
    <property type="match status" value="1"/>
</dbReference>
<dbReference type="FunFam" id="3.90.1150.10:FF:000002">
    <property type="entry name" value="Cysteine desulfurase IscS"/>
    <property type="match status" value="1"/>
</dbReference>
<dbReference type="Gene3D" id="3.90.1150.10">
    <property type="entry name" value="Aspartate Aminotransferase, domain 1"/>
    <property type="match status" value="1"/>
</dbReference>
<dbReference type="Gene3D" id="3.40.640.10">
    <property type="entry name" value="Type I PLP-dependent aspartate aminotransferase-like (Major domain)"/>
    <property type="match status" value="1"/>
</dbReference>
<dbReference type="HAMAP" id="MF_00331">
    <property type="entry name" value="Cys_desulf_IscS"/>
    <property type="match status" value="1"/>
</dbReference>
<dbReference type="InterPro" id="IPR000192">
    <property type="entry name" value="Aminotrans_V_dom"/>
</dbReference>
<dbReference type="InterPro" id="IPR020578">
    <property type="entry name" value="Aminotrans_V_PyrdxlP_BS"/>
</dbReference>
<dbReference type="InterPro" id="IPR010240">
    <property type="entry name" value="Cys_deSase_IscS"/>
</dbReference>
<dbReference type="InterPro" id="IPR016454">
    <property type="entry name" value="Cysteine_dSase"/>
</dbReference>
<dbReference type="InterPro" id="IPR015424">
    <property type="entry name" value="PyrdxlP-dep_Trfase"/>
</dbReference>
<dbReference type="InterPro" id="IPR015421">
    <property type="entry name" value="PyrdxlP-dep_Trfase_major"/>
</dbReference>
<dbReference type="InterPro" id="IPR015422">
    <property type="entry name" value="PyrdxlP-dep_Trfase_small"/>
</dbReference>
<dbReference type="NCBIfam" id="TIGR02006">
    <property type="entry name" value="IscS"/>
    <property type="match status" value="1"/>
</dbReference>
<dbReference type="NCBIfam" id="NF010611">
    <property type="entry name" value="PRK14012.1"/>
    <property type="match status" value="1"/>
</dbReference>
<dbReference type="PANTHER" id="PTHR11601:SF34">
    <property type="entry name" value="CYSTEINE DESULFURASE"/>
    <property type="match status" value="1"/>
</dbReference>
<dbReference type="PANTHER" id="PTHR11601">
    <property type="entry name" value="CYSTEINE DESULFURYLASE FAMILY MEMBER"/>
    <property type="match status" value="1"/>
</dbReference>
<dbReference type="Pfam" id="PF00266">
    <property type="entry name" value="Aminotran_5"/>
    <property type="match status" value="1"/>
</dbReference>
<dbReference type="PIRSF" id="PIRSF005572">
    <property type="entry name" value="NifS"/>
    <property type="match status" value="1"/>
</dbReference>
<dbReference type="SUPFAM" id="SSF53383">
    <property type="entry name" value="PLP-dependent transferases"/>
    <property type="match status" value="1"/>
</dbReference>
<dbReference type="PROSITE" id="PS00595">
    <property type="entry name" value="AA_TRANSFER_CLASS_5"/>
    <property type="match status" value="1"/>
</dbReference>
<keyword id="KW-0001">2Fe-2S</keyword>
<keyword id="KW-0963">Cytoplasm</keyword>
<keyword id="KW-0408">Iron</keyword>
<keyword id="KW-0411">Iron-sulfur</keyword>
<keyword id="KW-0479">Metal-binding</keyword>
<keyword id="KW-0663">Pyridoxal phosphate</keyword>
<keyword id="KW-0808">Transferase</keyword>
<organism>
    <name type="scientific">Pseudomonas aeruginosa (strain UCBPP-PA14)</name>
    <dbReference type="NCBI Taxonomy" id="208963"/>
    <lineage>
        <taxon>Bacteria</taxon>
        <taxon>Pseudomonadati</taxon>
        <taxon>Pseudomonadota</taxon>
        <taxon>Gammaproteobacteria</taxon>
        <taxon>Pseudomonadales</taxon>
        <taxon>Pseudomonadaceae</taxon>
        <taxon>Pseudomonas</taxon>
    </lineage>
</organism>
<accession>Q02RW8</accession>